<evidence type="ECO:0000255" key="1">
    <source>
        <dbReference type="HAMAP-Rule" id="MF_00034"/>
    </source>
</evidence>
<keyword id="KW-0963">Cytoplasm</keyword>
<keyword id="KW-0227">DNA damage</keyword>
<keyword id="KW-0233">DNA recombination</keyword>
<keyword id="KW-0234">DNA repair</keyword>
<keyword id="KW-0238">DNA-binding</keyword>
<keyword id="KW-0255">Endonuclease</keyword>
<keyword id="KW-0378">Hydrolase</keyword>
<keyword id="KW-0460">Magnesium</keyword>
<keyword id="KW-0479">Metal-binding</keyword>
<keyword id="KW-0540">Nuclease</keyword>
<keyword id="KW-1185">Reference proteome</keyword>
<organism>
    <name type="scientific">Alkaliphilus metalliredigens (strain QYMF)</name>
    <dbReference type="NCBI Taxonomy" id="293826"/>
    <lineage>
        <taxon>Bacteria</taxon>
        <taxon>Bacillati</taxon>
        <taxon>Bacillota</taxon>
        <taxon>Clostridia</taxon>
        <taxon>Peptostreptococcales</taxon>
        <taxon>Natronincolaceae</taxon>
        <taxon>Alkaliphilus</taxon>
    </lineage>
</organism>
<protein>
    <recommendedName>
        <fullName evidence="1">Crossover junction endodeoxyribonuclease RuvC</fullName>
        <ecNumber evidence="1">3.1.21.10</ecNumber>
    </recommendedName>
    <alternativeName>
        <fullName evidence="1">Holliday junction nuclease RuvC</fullName>
    </alternativeName>
    <alternativeName>
        <fullName evidence="1">Holliday junction resolvase RuvC</fullName>
    </alternativeName>
</protein>
<comment type="function">
    <text evidence="1">The RuvA-RuvB-RuvC complex processes Holliday junction (HJ) DNA during genetic recombination and DNA repair. Endonuclease that resolves HJ intermediates. Cleaves cruciform DNA by making single-stranded nicks across the HJ at symmetrical positions within the homologous arms, yielding a 5'-phosphate and a 3'-hydroxyl group; requires a central core of homology in the junction. The consensus cleavage sequence is 5'-(A/T)TT(C/G)-3'. Cleavage occurs on the 3'-side of the TT dinucleotide at the point of strand exchange. HJ branch migration catalyzed by RuvA-RuvB allows RuvC to scan DNA until it finds its consensus sequence, where it cleaves and resolves the cruciform DNA.</text>
</comment>
<comment type="catalytic activity">
    <reaction evidence="1">
        <text>Endonucleolytic cleavage at a junction such as a reciprocal single-stranded crossover between two homologous DNA duplexes (Holliday junction).</text>
        <dbReference type="EC" id="3.1.21.10"/>
    </reaction>
</comment>
<comment type="cofactor">
    <cofactor evidence="1">
        <name>Mg(2+)</name>
        <dbReference type="ChEBI" id="CHEBI:18420"/>
    </cofactor>
    <text evidence="1">Binds 2 Mg(2+) ion per subunit.</text>
</comment>
<comment type="subunit">
    <text evidence="1">Homodimer which binds Holliday junction (HJ) DNA. The HJ becomes 2-fold symmetrical on binding to RuvC with unstacked arms; it has a different conformation from HJ DNA in complex with RuvA. In the full resolvosome a probable DNA-RuvA(4)-RuvB(12)-RuvC(2) complex forms which resolves the HJ.</text>
</comment>
<comment type="subcellular location">
    <subcellularLocation>
        <location evidence="1">Cytoplasm</location>
    </subcellularLocation>
</comment>
<comment type="similarity">
    <text evidence="1">Belongs to the RuvC family.</text>
</comment>
<feature type="chain" id="PRO_1000057260" description="Crossover junction endodeoxyribonuclease RuvC">
    <location>
        <begin position="1"/>
        <end position="164"/>
    </location>
</feature>
<feature type="active site" evidence="1">
    <location>
        <position position="7"/>
    </location>
</feature>
<feature type="active site" evidence="1">
    <location>
        <position position="67"/>
    </location>
</feature>
<feature type="active site" evidence="1">
    <location>
        <position position="140"/>
    </location>
</feature>
<feature type="binding site" evidence="1">
    <location>
        <position position="7"/>
    </location>
    <ligand>
        <name>Mg(2+)</name>
        <dbReference type="ChEBI" id="CHEBI:18420"/>
        <label>1</label>
    </ligand>
</feature>
<feature type="binding site" evidence="1">
    <location>
        <position position="67"/>
    </location>
    <ligand>
        <name>Mg(2+)</name>
        <dbReference type="ChEBI" id="CHEBI:18420"/>
        <label>2</label>
    </ligand>
</feature>
<feature type="binding site" evidence="1">
    <location>
        <position position="140"/>
    </location>
    <ligand>
        <name>Mg(2+)</name>
        <dbReference type="ChEBI" id="CHEBI:18420"/>
        <label>1</label>
    </ligand>
</feature>
<name>RUVC_ALKMQ</name>
<dbReference type="EC" id="3.1.21.10" evidence="1"/>
<dbReference type="EMBL" id="CP000724">
    <property type="protein sequence ID" value="ABR48491.1"/>
    <property type="molecule type" value="Genomic_DNA"/>
</dbReference>
<dbReference type="RefSeq" id="WP_012063466.1">
    <property type="nucleotide sequence ID" value="NC_009633.1"/>
</dbReference>
<dbReference type="SMR" id="A6TQM3"/>
<dbReference type="STRING" id="293826.Amet_2337"/>
<dbReference type="KEGG" id="amt:Amet_2337"/>
<dbReference type="eggNOG" id="COG0817">
    <property type="taxonomic scope" value="Bacteria"/>
</dbReference>
<dbReference type="HOGENOM" id="CLU_091257_3_1_9"/>
<dbReference type="OrthoDB" id="9805499at2"/>
<dbReference type="Proteomes" id="UP000001572">
    <property type="component" value="Chromosome"/>
</dbReference>
<dbReference type="GO" id="GO:0005737">
    <property type="term" value="C:cytoplasm"/>
    <property type="evidence" value="ECO:0007669"/>
    <property type="project" value="UniProtKB-SubCell"/>
</dbReference>
<dbReference type="GO" id="GO:0048476">
    <property type="term" value="C:Holliday junction resolvase complex"/>
    <property type="evidence" value="ECO:0007669"/>
    <property type="project" value="UniProtKB-UniRule"/>
</dbReference>
<dbReference type="GO" id="GO:0008821">
    <property type="term" value="F:crossover junction DNA endonuclease activity"/>
    <property type="evidence" value="ECO:0007669"/>
    <property type="project" value="UniProtKB-UniRule"/>
</dbReference>
<dbReference type="GO" id="GO:0003677">
    <property type="term" value="F:DNA binding"/>
    <property type="evidence" value="ECO:0007669"/>
    <property type="project" value="UniProtKB-KW"/>
</dbReference>
<dbReference type="GO" id="GO:0000287">
    <property type="term" value="F:magnesium ion binding"/>
    <property type="evidence" value="ECO:0007669"/>
    <property type="project" value="UniProtKB-UniRule"/>
</dbReference>
<dbReference type="GO" id="GO:0006310">
    <property type="term" value="P:DNA recombination"/>
    <property type="evidence" value="ECO:0007669"/>
    <property type="project" value="UniProtKB-UniRule"/>
</dbReference>
<dbReference type="GO" id="GO:0006281">
    <property type="term" value="P:DNA repair"/>
    <property type="evidence" value="ECO:0007669"/>
    <property type="project" value="UniProtKB-UniRule"/>
</dbReference>
<dbReference type="CDD" id="cd16962">
    <property type="entry name" value="RuvC"/>
    <property type="match status" value="1"/>
</dbReference>
<dbReference type="FunFam" id="3.30.420.10:FF:000002">
    <property type="entry name" value="Crossover junction endodeoxyribonuclease RuvC"/>
    <property type="match status" value="1"/>
</dbReference>
<dbReference type="Gene3D" id="3.30.420.10">
    <property type="entry name" value="Ribonuclease H-like superfamily/Ribonuclease H"/>
    <property type="match status" value="1"/>
</dbReference>
<dbReference type="HAMAP" id="MF_00034">
    <property type="entry name" value="RuvC"/>
    <property type="match status" value="1"/>
</dbReference>
<dbReference type="InterPro" id="IPR012337">
    <property type="entry name" value="RNaseH-like_sf"/>
</dbReference>
<dbReference type="InterPro" id="IPR036397">
    <property type="entry name" value="RNaseH_sf"/>
</dbReference>
<dbReference type="InterPro" id="IPR020563">
    <property type="entry name" value="X-over_junc_endoDNase_Mg_BS"/>
</dbReference>
<dbReference type="InterPro" id="IPR002176">
    <property type="entry name" value="X-over_junc_endoDNase_RuvC"/>
</dbReference>
<dbReference type="NCBIfam" id="NF000711">
    <property type="entry name" value="PRK00039.2-1"/>
    <property type="match status" value="1"/>
</dbReference>
<dbReference type="NCBIfam" id="TIGR00228">
    <property type="entry name" value="ruvC"/>
    <property type="match status" value="1"/>
</dbReference>
<dbReference type="PANTHER" id="PTHR30194">
    <property type="entry name" value="CROSSOVER JUNCTION ENDODEOXYRIBONUCLEASE RUVC"/>
    <property type="match status" value="1"/>
</dbReference>
<dbReference type="PANTHER" id="PTHR30194:SF3">
    <property type="entry name" value="CROSSOVER JUNCTION ENDODEOXYRIBONUCLEASE RUVC"/>
    <property type="match status" value="1"/>
</dbReference>
<dbReference type="Pfam" id="PF02075">
    <property type="entry name" value="RuvC"/>
    <property type="match status" value="1"/>
</dbReference>
<dbReference type="PRINTS" id="PR00696">
    <property type="entry name" value="RSOLVASERUVC"/>
</dbReference>
<dbReference type="SUPFAM" id="SSF53098">
    <property type="entry name" value="Ribonuclease H-like"/>
    <property type="match status" value="1"/>
</dbReference>
<dbReference type="PROSITE" id="PS01321">
    <property type="entry name" value="RUVC"/>
    <property type="match status" value="1"/>
</dbReference>
<sequence length="164" mass="18130">MIILGIDPGIAILGYGIVKYEGNKFKVIDYGAIKTSSKMATPQRLKEIYLRLDELISEYQPDAVAIEELFFNTNTTTAMVVSHARGVAVLAAAIHEKEIYEYTPLQVKQAVVGYGRAEKKQVQQMIKILLNLEQAPKPDDVADALAVAVCHAHSGHFQSLFKVK</sequence>
<reference key="1">
    <citation type="journal article" date="2016" name="Genome Announc.">
        <title>Complete genome sequence of Alkaliphilus metalliredigens strain QYMF, an alkaliphilic and metal-reducing bacterium isolated from borax-contaminated leachate ponds.</title>
        <authorList>
            <person name="Hwang C."/>
            <person name="Copeland A."/>
            <person name="Lucas S."/>
            <person name="Lapidus A."/>
            <person name="Barry K."/>
            <person name="Detter J.C."/>
            <person name="Glavina Del Rio T."/>
            <person name="Hammon N."/>
            <person name="Israni S."/>
            <person name="Dalin E."/>
            <person name="Tice H."/>
            <person name="Pitluck S."/>
            <person name="Chertkov O."/>
            <person name="Brettin T."/>
            <person name="Bruce D."/>
            <person name="Han C."/>
            <person name="Schmutz J."/>
            <person name="Larimer F."/>
            <person name="Land M.L."/>
            <person name="Hauser L."/>
            <person name="Kyrpides N."/>
            <person name="Mikhailova N."/>
            <person name="Ye Q."/>
            <person name="Zhou J."/>
            <person name="Richardson P."/>
            <person name="Fields M.W."/>
        </authorList>
    </citation>
    <scope>NUCLEOTIDE SEQUENCE [LARGE SCALE GENOMIC DNA]</scope>
    <source>
        <strain>QYMF</strain>
    </source>
</reference>
<accession>A6TQM3</accession>
<proteinExistence type="inferred from homology"/>
<gene>
    <name evidence="1" type="primary">ruvC</name>
    <name type="ordered locus">Amet_2337</name>
</gene>